<feature type="chain" id="PRO_0000122957" description="DNA repair protein rhp57">
    <location>
        <begin position="1"/>
        <end position="354"/>
    </location>
</feature>
<feature type="binding site" evidence="1">
    <location>
        <begin position="100"/>
        <end position="107"/>
    </location>
    <ligand>
        <name>ATP</name>
        <dbReference type="ChEBI" id="CHEBI:30616"/>
    </ligand>
</feature>
<proteinExistence type="evidence at protein level"/>
<dbReference type="EMBL" id="AB024744">
    <property type="protein sequence ID" value="BAA83768.1"/>
    <property type="molecule type" value="Genomic_DNA"/>
</dbReference>
<dbReference type="EMBL" id="CU329670">
    <property type="protein sequence ID" value="CAC19737.1"/>
    <property type="molecule type" value="Genomic_DNA"/>
</dbReference>
<dbReference type="PIR" id="T43507">
    <property type="entry name" value="T43507"/>
</dbReference>
<dbReference type="RefSeq" id="NP_593627.1">
    <property type="nucleotide sequence ID" value="NM_001019058.2"/>
</dbReference>
<dbReference type="SMR" id="Q9UUL2"/>
<dbReference type="BioGRID" id="278490">
    <property type="interactions" value="237"/>
</dbReference>
<dbReference type="FunCoup" id="Q9UUL2">
    <property type="interactions" value="130"/>
</dbReference>
<dbReference type="IntAct" id="Q9UUL2">
    <property type="interactions" value="3"/>
</dbReference>
<dbReference type="STRING" id="284812.Q9UUL2"/>
<dbReference type="PaxDb" id="4896-SPAC20H4.07.1"/>
<dbReference type="EnsemblFungi" id="SPAC20H4.07.1">
    <property type="protein sequence ID" value="SPAC20H4.07.1:pep"/>
    <property type="gene ID" value="SPAC20H4.07"/>
</dbReference>
<dbReference type="GeneID" id="2542007"/>
<dbReference type="KEGG" id="spo:2542007"/>
<dbReference type="PomBase" id="SPAC20H4.07"/>
<dbReference type="VEuPathDB" id="FungiDB:SPAC20H4.07"/>
<dbReference type="eggNOG" id="KOG1564">
    <property type="taxonomic scope" value="Eukaryota"/>
</dbReference>
<dbReference type="HOGENOM" id="CLU_013059_0_0_1"/>
<dbReference type="InParanoid" id="Q9UUL2"/>
<dbReference type="OMA" id="WANQVTV"/>
<dbReference type="PhylomeDB" id="Q9UUL2"/>
<dbReference type="PRO" id="PR:Q9UUL2"/>
<dbReference type="Proteomes" id="UP000002485">
    <property type="component" value="Chromosome I"/>
</dbReference>
<dbReference type="GO" id="GO:0005829">
    <property type="term" value="C:cytosol"/>
    <property type="evidence" value="ECO:0007005"/>
    <property type="project" value="PomBase"/>
</dbReference>
<dbReference type="GO" id="GO:0005634">
    <property type="term" value="C:nucleus"/>
    <property type="evidence" value="ECO:0007005"/>
    <property type="project" value="PomBase"/>
</dbReference>
<dbReference type="GO" id="GO:0033065">
    <property type="term" value="C:Rad51C-XRCC3 complex"/>
    <property type="evidence" value="ECO:0000303"/>
    <property type="project" value="PomBase"/>
</dbReference>
<dbReference type="GO" id="GO:0035861">
    <property type="term" value="C:site of double-strand break"/>
    <property type="evidence" value="ECO:0000314"/>
    <property type="project" value="PomBase"/>
</dbReference>
<dbReference type="GO" id="GO:0005524">
    <property type="term" value="F:ATP binding"/>
    <property type="evidence" value="ECO:0007669"/>
    <property type="project" value="UniProtKB-KW"/>
</dbReference>
<dbReference type="GO" id="GO:0016887">
    <property type="term" value="F:ATP hydrolysis activity"/>
    <property type="evidence" value="ECO:0000303"/>
    <property type="project" value="PomBase"/>
</dbReference>
<dbReference type="GO" id="GO:0008094">
    <property type="term" value="F:ATP-dependent activity, acting on DNA"/>
    <property type="evidence" value="ECO:0000318"/>
    <property type="project" value="GO_Central"/>
</dbReference>
<dbReference type="GO" id="GO:0140664">
    <property type="term" value="F:ATP-dependent DNA damage sensor activity"/>
    <property type="evidence" value="ECO:0007669"/>
    <property type="project" value="InterPro"/>
</dbReference>
<dbReference type="GO" id="GO:0000150">
    <property type="term" value="F:DNA strand exchange activity"/>
    <property type="evidence" value="ECO:0000318"/>
    <property type="project" value="GO_Central"/>
</dbReference>
<dbReference type="GO" id="GO:0003690">
    <property type="term" value="F:double-stranded DNA binding"/>
    <property type="evidence" value="ECO:0000318"/>
    <property type="project" value="GO_Central"/>
</dbReference>
<dbReference type="GO" id="GO:0003697">
    <property type="term" value="F:single-stranded DNA binding"/>
    <property type="evidence" value="ECO:0000318"/>
    <property type="project" value="GO_Central"/>
</dbReference>
<dbReference type="GO" id="GO:0000730">
    <property type="term" value="P:DNA recombinase assembly"/>
    <property type="evidence" value="ECO:0000315"/>
    <property type="project" value="PomBase"/>
</dbReference>
<dbReference type="GO" id="GO:0042148">
    <property type="term" value="P:DNA strand invasion"/>
    <property type="evidence" value="ECO:0000318"/>
    <property type="project" value="GO_Central"/>
</dbReference>
<dbReference type="GO" id="GO:0000724">
    <property type="term" value="P:double-strand break repair via homologous recombination"/>
    <property type="evidence" value="ECO:0000316"/>
    <property type="project" value="PomBase"/>
</dbReference>
<dbReference type="GO" id="GO:0007533">
    <property type="term" value="P:mating type switching"/>
    <property type="evidence" value="ECO:0000315"/>
    <property type="project" value="PomBase"/>
</dbReference>
<dbReference type="GO" id="GO:0006312">
    <property type="term" value="P:mitotic recombination"/>
    <property type="evidence" value="ECO:0000318"/>
    <property type="project" value="GO_Central"/>
</dbReference>
<dbReference type="GO" id="GO:0007131">
    <property type="term" value="P:reciprocal meiotic recombination"/>
    <property type="evidence" value="ECO:0000315"/>
    <property type="project" value="PomBase"/>
</dbReference>
<dbReference type="CDD" id="cd19491">
    <property type="entry name" value="XRCC3"/>
    <property type="match status" value="1"/>
</dbReference>
<dbReference type="FunFam" id="3.40.50.300:FF:002736">
    <property type="entry name" value="Spindle B"/>
    <property type="match status" value="1"/>
</dbReference>
<dbReference type="Gene3D" id="3.40.50.300">
    <property type="entry name" value="P-loop containing nucleotide triphosphate hydrolases"/>
    <property type="match status" value="1"/>
</dbReference>
<dbReference type="InterPro" id="IPR013632">
    <property type="entry name" value="DNA_recomb/repair_Rad51_C"/>
</dbReference>
<dbReference type="InterPro" id="IPR016467">
    <property type="entry name" value="DNA_recomb/repair_RecA-like"/>
</dbReference>
<dbReference type="InterPro" id="IPR027417">
    <property type="entry name" value="P-loop_NTPase"/>
</dbReference>
<dbReference type="InterPro" id="IPR020588">
    <property type="entry name" value="RecA_ATP-bd"/>
</dbReference>
<dbReference type="InterPro" id="IPR047348">
    <property type="entry name" value="XRCC3-like_C"/>
</dbReference>
<dbReference type="PANTHER" id="PTHR22942:SF66">
    <property type="entry name" value="RE19845P"/>
    <property type="match status" value="1"/>
</dbReference>
<dbReference type="PANTHER" id="PTHR22942">
    <property type="entry name" value="RECA/RAD51/RADA DNA STRAND-PAIRING FAMILY MEMBER"/>
    <property type="match status" value="1"/>
</dbReference>
<dbReference type="Pfam" id="PF08423">
    <property type="entry name" value="Rad51"/>
    <property type="match status" value="1"/>
</dbReference>
<dbReference type="PIRSF" id="PIRSF005856">
    <property type="entry name" value="Rad51"/>
    <property type="match status" value="1"/>
</dbReference>
<dbReference type="SUPFAM" id="SSF52540">
    <property type="entry name" value="P-loop containing nucleoside triphosphate hydrolases"/>
    <property type="match status" value="1"/>
</dbReference>
<dbReference type="PROSITE" id="PS50162">
    <property type="entry name" value="RECA_2"/>
    <property type="match status" value="1"/>
</dbReference>
<name>RAD57_SCHPO</name>
<accession>Q9UUL2</accession>
<accession>Q9P7A6</accession>
<keyword id="KW-0067">ATP-binding</keyword>
<keyword id="KW-0227">DNA damage</keyword>
<keyword id="KW-0234">DNA repair</keyword>
<keyword id="KW-0547">Nucleotide-binding</keyword>
<keyword id="KW-0539">Nucleus</keyword>
<keyword id="KW-1185">Reference proteome</keyword>
<protein>
    <recommendedName>
        <fullName>DNA repair protein rhp57</fullName>
    </recommendedName>
    <alternativeName>
        <fullName>RAD57 homolog</fullName>
    </alternativeName>
</protein>
<gene>
    <name type="primary">rhp57</name>
    <name type="ORF">SPAC145.01</name>
    <name type="ORF">SPAC20H4.07</name>
</gene>
<reference key="1">
    <citation type="journal article" date="2000" name="Genetics">
        <title>A recombination repair gene of Schizosaccharomyces pombe, rhp57, is a functional homolog of the Saccharomyces cerevisiae RAD57 gene and is phylogenetically related to the human XRCC3 gene.</title>
        <authorList>
            <person name="Tsutsui Y."/>
            <person name="Morishita T."/>
            <person name="Iwasaki H."/>
            <person name="Toh H."/>
            <person name="Shinagawa H."/>
        </authorList>
    </citation>
    <scope>NUCLEOTIDE SEQUENCE [GENOMIC DNA]</scope>
    <scope>FUNCTION</scope>
</reference>
<reference key="2">
    <citation type="journal article" date="2002" name="Nature">
        <title>The genome sequence of Schizosaccharomyces pombe.</title>
        <authorList>
            <person name="Wood V."/>
            <person name="Gwilliam R."/>
            <person name="Rajandream M.A."/>
            <person name="Lyne M.H."/>
            <person name="Lyne R."/>
            <person name="Stewart A."/>
            <person name="Sgouros J.G."/>
            <person name="Peat N."/>
            <person name="Hayles J."/>
            <person name="Baker S.G."/>
            <person name="Basham D."/>
            <person name="Bowman S."/>
            <person name="Brooks K."/>
            <person name="Brown D."/>
            <person name="Brown S."/>
            <person name="Chillingworth T."/>
            <person name="Churcher C.M."/>
            <person name="Collins M."/>
            <person name="Connor R."/>
            <person name="Cronin A."/>
            <person name="Davis P."/>
            <person name="Feltwell T."/>
            <person name="Fraser A."/>
            <person name="Gentles S."/>
            <person name="Goble A."/>
            <person name="Hamlin N."/>
            <person name="Harris D.E."/>
            <person name="Hidalgo J."/>
            <person name="Hodgson G."/>
            <person name="Holroyd S."/>
            <person name="Hornsby T."/>
            <person name="Howarth S."/>
            <person name="Huckle E.J."/>
            <person name="Hunt S."/>
            <person name="Jagels K."/>
            <person name="James K.D."/>
            <person name="Jones L."/>
            <person name="Jones M."/>
            <person name="Leather S."/>
            <person name="McDonald S."/>
            <person name="McLean J."/>
            <person name="Mooney P."/>
            <person name="Moule S."/>
            <person name="Mungall K.L."/>
            <person name="Murphy L.D."/>
            <person name="Niblett D."/>
            <person name="Odell C."/>
            <person name="Oliver K."/>
            <person name="O'Neil S."/>
            <person name="Pearson D."/>
            <person name="Quail M.A."/>
            <person name="Rabbinowitsch E."/>
            <person name="Rutherford K.M."/>
            <person name="Rutter S."/>
            <person name="Saunders D."/>
            <person name="Seeger K."/>
            <person name="Sharp S."/>
            <person name="Skelton J."/>
            <person name="Simmonds M.N."/>
            <person name="Squares R."/>
            <person name="Squares S."/>
            <person name="Stevens K."/>
            <person name="Taylor K."/>
            <person name="Taylor R.G."/>
            <person name="Tivey A."/>
            <person name="Walsh S.V."/>
            <person name="Warren T."/>
            <person name="Whitehead S."/>
            <person name="Woodward J.R."/>
            <person name="Volckaert G."/>
            <person name="Aert R."/>
            <person name="Robben J."/>
            <person name="Grymonprez B."/>
            <person name="Weltjens I."/>
            <person name="Vanstreels E."/>
            <person name="Rieger M."/>
            <person name="Schaefer M."/>
            <person name="Mueller-Auer S."/>
            <person name="Gabel C."/>
            <person name="Fuchs M."/>
            <person name="Duesterhoeft A."/>
            <person name="Fritzc C."/>
            <person name="Holzer E."/>
            <person name="Moestl D."/>
            <person name="Hilbert H."/>
            <person name="Borzym K."/>
            <person name="Langer I."/>
            <person name="Beck A."/>
            <person name="Lehrach H."/>
            <person name="Reinhardt R."/>
            <person name="Pohl T.M."/>
            <person name="Eger P."/>
            <person name="Zimmermann W."/>
            <person name="Wedler H."/>
            <person name="Wambutt R."/>
            <person name="Purnelle B."/>
            <person name="Goffeau A."/>
            <person name="Cadieu E."/>
            <person name="Dreano S."/>
            <person name="Gloux S."/>
            <person name="Lelaure V."/>
            <person name="Mottier S."/>
            <person name="Galibert F."/>
            <person name="Aves S.J."/>
            <person name="Xiang Z."/>
            <person name="Hunt C."/>
            <person name="Moore K."/>
            <person name="Hurst S.M."/>
            <person name="Lucas M."/>
            <person name="Rochet M."/>
            <person name="Gaillardin C."/>
            <person name="Tallada V.A."/>
            <person name="Garzon A."/>
            <person name="Thode G."/>
            <person name="Daga R.R."/>
            <person name="Cruzado L."/>
            <person name="Jimenez J."/>
            <person name="Sanchez M."/>
            <person name="del Rey F."/>
            <person name="Benito J."/>
            <person name="Dominguez A."/>
            <person name="Revuelta J.L."/>
            <person name="Moreno S."/>
            <person name="Armstrong J."/>
            <person name="Forsburg S.L."/>
            <person name="Cerutti L."/>
            <person name="Lowe T."/>
            <person name="McCombie W.R."/>
            <person name="Paulsen I."/>
            <person name="Potashkin J."/>
            <person name="Shpakovski G.V."/>
            <person name="Ussery D."/>
            <person name="Barrell B.G."/>
            <person name="Nurse P."/>
        </authorList>
    </citation>
    <scope>NUCLEOTIDE SEQUENCE [LARGE SCALE GENOMIC DNA]</scope>
    <source>
        <strain>972 / ATCC 24843</strain>
    </source>
</reference>
<sequence length="354" mass="39731">MDISNYVDNFYFDEKIASAFELGEVSTVDLLTLDITELERRTHCSQSELLQLIEQISLLLQPVRCSASKVTSKYLTTGDVKLDETLHGGIPVGQLTEICGESGSGKSQFCMQLCLMVQLPLSLGGMNKAAVFISTESGLETKRLFELARYLPERYPKADKKDIIIKNPGDRVYTILCPDLESQEHIIQYQLPILFNRDKIGLVILDSVASNYRAELRYNRSKSHFRDLDNIAKRGNQLGKLAMTLRTLAHQHEAAVVIANQVSDRIPRDYDAIGLFSLDYQSQWFSGWDDTDPNPKIPSLGLVWTNNISTRLALIKKTDSATNNSGRIFRVVYSPNSPRLDVRICIGSVGIYSC</sequence>
<comment type="function">
    <text evidence="2">Involved in recombination DNA repair and in the repair of gamma-ray-induced damage.</text>
</comment>
<comment type="interaction">
    <interactant intactId="EBI-1996765">
        <id>Q9UUL2</id>
    </interactant>
    <interactant intactId="EBI-1996748">
        <id>O14129</id>
        <label>rhp55</label>
    </interactant>
    <organismsDiffer>false</organismsDiffer>
    <experiments>4</experiments>
</comment>
<comment type="subcellular location">
    <subcellularLocation>
        <location evidence="3">Nucleus</location>
    </subcellularLocation>
</comment>
<comment type="similarity">
    <text evidence="3">Belongs to the RecA family.</text>
</comment>
<organism>
    <name type="scientific">Schizosaccharomyces pombe (strain 972 / ATCC 24843)</name>
    <name type="common">Fission yeast</name>
    <dbReference type="NCBI Taxonomy" id="284812"/>
    <lineage>
        <taxon>Eukaryota</taxon>
        <taxon>Fungi</taxon>
        <taxon>Dikarya</taxon>
        <taxon>Ascomycota</taxon>
        <taxon>Taphrinomycotina</taxon>
        <taxon>Schizosaccharomycetes</taxon>
        <taxon>Schizosaccharomycetales</taxon>
        <taxon>Schizosaccharomycetaceae</taxon>
        <taxon>Schizosaccharomyces</taxon>
    </lineage>
</organism>
<evidence type="ECO:0000255" key="1"/>
<evidence type="ECO:0000269" key="2">
    <source>
    </source>
</evidence>
<evidence type="ECO:0000305" key="3"/>